<dbReference type="EC" id="2.5.1.120" evidence="1"/>
<dbReference type="EMBL" id="AP008226">
    <property type="protein sequence ID" value="BAD70627.1"/>
    <property type="molecule type" value="Genomic_DNA"/>
</dbReference>
<dbReference type="RefSeq" id="WP_011172898.1">
    <property type="nucleotide sequence ID" value="NC_006461.1"/>
</dbReference>
<dbReference type="RefSeq" id="YP_144070.1">
    <property type="nucleotide sequence ID" value="NC_006461.1"/>
</dbReference>
<dbReference type="SMR" id="Q5SK48"/>
<dbReference type="BindingDB" id="Q5SK48"/>
<dbReference type="ChEMBL" id="CHEMBL4523327"/>
<dbReference type="EnsemblBacteria" id="BAD70627">
    <property type="protein sequence ID" value="BAD70627"/>
    <property type="gene ID" value="BAD70627"/>
</dbReference>
<dbReference type="GeneID" id="3169961"/>
<dbReference type="KEGG" id="ttj:TTHA0804"/>
<dbReference type="PATRIC" id="fig|300852.9.peg.798"/>
<dbReference type="eggNOG" id="COG1060">
    <property type="taxonomic scope" value="Bacteria"/>
</dbReference>
<dbReference type="HOGENOM" id="CLU_040406_0_0_0"/>
<dbReference type="PhylomeDB" id="Q5SK48"/>
<dbReference type="BioCyc" id="MetaCyc:MONOMER-18457"/>
<dbReference type="BRENDA" id="2.5.1.120">
    <property type="organism ID" value="2305"/>
</dbReference>
<dbReference type="UniPathway" id="UPA00079"/>
<dbReference type="Proteomes" id="UP000000532">
    <property type="component" value="Chromosome"/>
</dbReference>
<dbReference type="GO" id="GO:0051539">
    <property type="term" value="F:4 iron, 4 sulfur cluster binding"/>
    <property type="evidence" value="ECO:0007669"/>
    <property type="project" value="UniProtKB-KW"/>
</dbReference>
<dbReference type="GO" id="GO:0044689">
    <property type="term" value="F:7,8-didemethyl-8-hydroxy-5-deazariboflavin synthase activity"/>
    <property type="evidence" value="ECO:0007669"/>
    <property type="project" value="TreeGrafter"/>
</dbReference>
<dbReference type="GO" id="GO:0102573">
    <property type="term" value="F:aminodeoxyfutalosine synthase activity"/>
    <property type="evidence" value="ECO:0007669"/>
    <property type="project" value="UniProtKB-EC"/>
</dbReference>
<dbReference type="GO" id="GO:0005506">
    <property type="term" value="F:iron ion binding"/>
    <property type="evidence" value="ECO:0007669"/>
    <property type="project" value="UniProtKB-UniRule"/>
</dbReference>
<dbReference type="GO" id="GO:0009234">
    <property type="term" value="P:menaquinone biosynthetic process"/>
    <property type="evidence" value="ECO:0007669"/>
    <property type="project" value="UniProtKB-UniRule"/>
</dbReference>
<dbReference type="CDD" id="cd01335">
    <property type="entry name" value="Radical_SAM"/>
    <property type="match status" value="1"/>
</dbReference>
<dbReference type="Gene3D" id="3.20.20.70">
    <property type="entry name" value="Aldolase class I"/>
    <property type="match status" value="1"/>
</dbReference>
<dbReference type="HAMAP" id="MF_00993">
    <property type="entry name" value="MqnE"/>
    <property type="match status" value="1"/>
</dbReference>
<dbReference type="InterPro" id="IPR013785">
    <property type="entry name" value="Aldolase_TIM"/>
</dbReference>
<dbReference type="InterPro" id="IPR045567">
    <property type="entry name" value="CofH/MnqC-like_C"/>
</dbReference>
<dbReference type="InterPro" id="IPR006638">
    <property type="entry name" value="Elp3/MiaA/NifB-like_rSAM"/>
</dbReference>
<dbReference type="InterPro" id="IPR034405">
    <property type="entry name" value="F420"/>
</dbReference>
<dbReference type="InterPro" id="IPR020050">
    <property type="entry name" value="FO_synthase_su2"/>
</dbReference>
<dbReference type="InterPro" id="IPR022432">
    <property type="entry name" value="MqnE"/>
</dbReference>
<dbReference type="InterPro" id="IPR007197">
    <property type="entry name" value="rSAM"/>
</dbReference>
<dbReference type="NCBIfam" id="TIGR00423">
    <property type="entry name" value="CofH family radical SAM protein"/>
    <property type="match status" value="1"/>
</dbReference>
<dbReference type="NCBIfam" id="TIGR03700">
    <property type="entry name" value="mena_SCO4494"/>
    <property type="match status" value="1"/>
</dbReference>
<dbReference type="PANTHER" id="PTHR43076:SF7">
    <property type="entry name" value="AMINODEOXYFUTALOSINE SYNTHASE"/>
    <property type="match status" value="1"/>
</dbReference>
<dbReference type="PANTHER" id="PTHR43076">
    <property type="entry name" value="FO SYNTHASE (COFH)"/>
    <property type="match status" value="1"/>
</dbReference>
<dbReference type="Pfam" id="PF19288">
    <property type="entry name" value="CofH_C"/>
    <property type="match status" value="1"/>
</dbReference>
<dbReference type="Pfam" id="PF04055">
    <property type="entry name" value="Radical_SAM"/>
    <property type="match status" value="1"/>
</dbReference>
<dbReference type="PIRSF" id="PIRSF004762">
    <property type="entry name" value="CHP00423"/>
    <property type="match status" value="1"/>
</dbReference>
<dbReference type="SFLD" id="SFLDF00343">
    <property type="entry name" value="aminofutalosine_synthase_(mqnE"/>
    <property type="match status" value="1"/>
</dbReference>
<dbReference type="SFLD" id="SFLDG01082">
    <property type="entry name" value="B12-binding_domain_containing"/>
    <property type="match status" value="1"/>
</dbReference>
<dbReference type="SFLD" id="SFLDF00342">
    <property type="entry name" value="cyclic_dehypoxanthine_futalosi"/>
    <property type="match status" value="1"/>
</dbReference>
<dbReference type="SFLD" id="SFLDG01389">
    <property type="entry name" value="menaquinone_synthsis_involved"/>
    <property type="match status" value="1"/>
</dbReference>
<dbReference type="SMART" id="SM00729">
    <property type="entry name" value="Elp3"/>
    <property type="match status" value="1"/>
</dbReference>
<dbReference type="SUPFAM" id="SSF102114">
    <property type="entry name" value="Radical SAM enzymes"/>
    <property type="match status" value="1"/>
</dbReference>
<dbReference type="PROSITE" id="PS51918">
    <property type="entry name" value="RADICAL_SAM"/>
    <property type="match status" value="1"/>
</dbReference>
<keyword id="KW-0004">4Fe-4S</keyword>
<keyword id="KW-0408">Iron</keyword>
<keyword id="KW-0411">Iron-sulfur</keyword>
<keyword id="KW-0474">Menaquinone biosynthesis</keyword>
<keyword id="KW-0479">Metal-binding</keyword>
<keyword id="KW-1185">Reference proteome</keyword>
<keyword id="KW-0949">S-adenosyl-L-methionine</keyword>
<keyword id="KW-0808">Transferase</keyword>
<proteinExistence type="evidence at protein level"/>
<reference key="1">
    <citation type="submission" date="2004-11" db="EMBL/GenBank/DDBJ databases">
        <title>Complete genome sequence of Thermus thermophilus HB8.</title>
        <authorList>
            <person name="Masui R."/>
            <person name="Kurokawa K."/>
            <person name="Nakagawa N."/>
            <person name="Tokunaga F."/>
            <person name="Koyama Y."/>
            <person name="Shibata T."/>
            <person name="Oshima T."/>
            <person name="Yokoyama S."/>
            <person name="Yasunaga T."/>
            <person name="Kuramitsu S."/>
        </authorList>
    </citation>
    <scope>NUCLEOTIDE SEQUENCE [LARGE SCALE GENOMIC DNA]</scope>
    <source>
        <strain>ATCC 27634 / DSM 579 / HB8</strain>
    </source>
</reference>
<reference key="2">
    <citation type="journal article" date="2013" name="J. Am. Chem. Soc.">
        <title>Menaquinone biosynthesis: formation of aminofutalosine requires a unique radical SAM enzyme.</title>
        <authorList>
            <person name="Mahanta N."/>
            <person name="Fedoseyenko D."/>
            <person name="Dairi T."/>
            <person name="Begley T.P."/>
        </authorList>
    </citation>
    <scope>FUNCTION</scope>
    <scope>CATALYTIC ACTIVITY</scope>
    <scope>COFACTOR</scope>
    <scope>PATHWAY</scope>
    <scope>GENE NAME</scope>
    <scope>REACTION MECHANISM</scope>
    <source>
        <strain>ATCC 27634 / DSM 579 / HB8</strain>
    </source>
</reference>
<comment type="function">
    <text evidence="1 3">Radical SAM enzyme that catalyzes the addition of the adenosyl radical to the double bond of 3-[(1-carboxyvinyl)oxy]benzoate, leading to aminodeoxyfutalosine (AFL), a key intermediate in the formation of menaquinone (MK, vitamin K2) from chorismate.</text>
</comment>
<comment type="catalytic activity">
    <reaction evidence="1 3">
        <text>3-[(1-carboxyvinyl)-oxy]benzoate + S-adenosyl-L-methionine + H2O = 6-amino-6-deoxyfutalosine + hydrogencarbonate + L-methionine + H(+)</text>
        <dbReference type="Rhea" id="RHEA:33075"/>
        <dbReference type="ChEBI" id="CHEBI:15377"/>
        <dbReference type="ChEBI" id="CHEBI:15378"/>
        <dbReference type="ChEBI" id="CHEBI:17544"/>
        <dbReference type="ChEBI" id="CHEBI:57844"/>
        <dbReference type="ChEBI" id="CHEBI:59789"/>
        <dbReference type="ChEBI" id="CHEBI:64286"/>
        <dbReference type="ChEBI" id="CHEBI:76981"/>
        <dbReference type="EC" id="2.5.1.120"/>
    </reaction>
</comment>
<comment type="cofactor">
    <cofactor evidence="3">
        <name>[4Fe-4S] cluster</name>
        <dbReference type="ChEBI" id="CHEBI:49883"/>
    </cofactor>
    <text evidence="3">Binds 1 [4Fe-4S] cluster. The cluster is likely coordinated with 3 cysteines and an exchangeable S-adenosyl-L-methionine.</text>
</comment>
<comment type="pathway">
    <text evidence="1 3">Quinol/quinone metabolism; menaquinone biosynthesis.</text>
</comment>
<comment type="similarity">
    <text evidence="1">Belongs to the radical SAM superfamily. MqnE family.</text>
</comment>
<name>MQNE_THET8</name>
<evidence type="ECO:0000255" key="1">
    <source>
        <dbReference type="HAMAP-Rule" id="MF_00993"/>
    </source>
</evidence>
<evidence type="ECO:0000255" key="2">
    <source>
        <dbReference type="PROSITE-ProRule" id="PRU01266"/>
    </source>
</evidence>
<evidence type="ECO:0000269" key="3">
    <source>
    </source>
</evidence>
<sequence>MRGIRDPRLIPIAEKVMEGKRLSFEDGLVLYQTKDLPTLMRLANLVRERKHGHKTYFVHSIRVSQTNICYVGCTFCAFQRRFGEEGAWDWDVDEVVAWVKERYQPGLTEIHLTAGHHPKRPFAYYLDLVRALKENFPGVQVKAWTAAEIHHFSKIARLPYREVLKALKEAGLDAMPGGGAEIFAERVRRKIARAKVSAEGWLEIHRTAHELGIPTNATMLYGHIETLEERLDHMDRLRRLQDETGGFMSFIPLAFQPDGNQLARELGKKEFTTGLDDLRNLAVARLYLDNFPHIKGYWATLTPELAQVSLDWGVTDVDGTLIEERIVHMAGSPTPQGLTKRELARIILMAGRIPVERDALYREVRVWDRVEA</sequence>
<organism>
    <name type="scientific">Thermus thermophilus (strain ATCC 27634 / DSM 579 / HB8)</name>
    <dbReference type="NCBI Taxonomy" id="300852"/>
    <lineage>
        <taxon>Bacteria</taxon>
        <taxon>Thermotogati</taxon>
        <taxon>Deinococcota</taxon>
        <taxon>Deinococci</taxon>
        <taxon>Thermales</taxon>
        <taxon>Thermaceae</taxon>
        <taxon>Thermus</taxon>
    </lineage>
</organism>
<protein>
    <recommendedName>
        <fullName evidence="1">Aminodeoxyfutalosine synthase</fullName>
        <shortName evidence="1">AFL synthase</shortName>
        <shortName evidence="1">Aminofutalosine synthase</shortName>
        <ecNumber evidence="1">2.5.1.120</ecNumber>
    </recommendedName>
    <alternativeName>
        <fullName evidence="1">Menaquinone biosynthetic enzyme MqnE</fullName>
    </alternativeName>
</protein>
<accession>Q5SK48</accession>
<feature type="chain" id="PRO_0000425129" description="Aminodeoxyfutalosine synthase">
    <location>
        <begin position="1"/>
        <end position="372"/>
    </location>
</feature>
<feature type="domain" description="Radical SAM core" evidence="2">
    <location>
        <begin position="53"/>
        <end position="292"/>
    </location>
</feature>
<feature type="binding site" evidence="1">
    <location>
        <position position="69"/>
    </location>
    <ligand>
        <name>[4Fe-4S] cluster</name>
        <dbReference type="ChEBI" id="CHEBI:49883"/>
        <note>4Fe-4S-S-AdoMet</note>
    </ligand>
</feature>
<feature type="binding site" evidence="1">
    <location>
        <position position="73"/>
    </location>
    <ligand>
        <name>[4Fe-4S] cluster</name>
        <dbReference type="ChEBI" id="CHEBI:49883"/>
        <note>4Fe-4S-S-AdoMet</note>
    </ligand>
</feature>
<feature type="binding site" evidence="1">
    <location>
        <position position="76"/>
    </location>
    <ligand>
        <name>[4Fe-4S] cluster</name>
        <dbReference type="ChEBI" id="CHEBI:49883"/>
        <note>4Fe-4S-S-AdoMet</note>
    </ligand>
</feature>
<gene>
    <name evidence="1" type="primary">mqnE</name>
    <name type="ordered locus">TTHA0804</name>
</gene>